<sequence length="833" mass="94348">MSTYNHREIEPKWQKYWAEHHTFKTGTDKDKPNFYALDMFPYPSGAGLHVGHPEGYTATDILSRYKRAQGYNVLHPMGWDAFGLPAEQYAMDTGNDPADFTAENIANFKRQINALGFSYDWDREVNTTDPNYYKWTQWIFTKLYEKGLAYEAEVPVNWVEELGTAIANEEVLPDGTSERGGYPVVRKPMRQWMLKITAYAERLLNDLEELDWPESIKDMQRNWIGKSTGANVTFKIKDTDKDFTVFTTRPDTLFGATYAVLAPEHALVDVITSAEQAQAVADYKHAASLKSDLARTDLAKEKTGVWTGAYAINPVNGKEIPIWIADYVLASYGTGAIMAVPAHDERDWEFAKQFDLEIIPVLEGGNVADAAYTEDGPHINSGFLDGLDKAAAIEKMVAWLEKEGVGNEKVTYRLRDWLFSRQRYWGEPIPIIHWEDGTSTAVPESELPLVLPVTKDIRPSGTGESPLANLTDWLEVTREDGVKGRRETNTMPQWAGSSWYYLRYIDPHNNEKLADEDLLKAWLPVDIYIGGAEHAVLHLLYARFWHKFLYDLGVVPTKEPFQKLFNQGMILGTSYRDHRGALVATDKVEKRDGSFFNIETGEELEQAPAKMSKSLKNVVNPDDVVEQYGADTLRVYEMFMGPLDASIAWSEEGLEGSRKFLDRVYRLLNTKELVTENSGALDKVYHETVKSVTEQLEELKFNTAIAQLMIFVNAANKEEKLYVEYAKGFIQLLAPFAPHLAEELWQAVAQTDESISYVAWPTYDESKLVEAEVEIVVQIKGKVRAKLVVAKDLSREELQEIALADEKIKSEIADKEVVKVISVPNKLVNIVVK</sequence>
<feature type="chain" id="PRO_1000074848" description="Leucine--tRNA ligase">
    <location>
        <begin position="1"/>
        <end position="833"/>
    </location>
</feature>
<feature type="short sequence motif" description="'HIGH' region">
    <location>
        <begin position="41"/>
        <end position="52"/>
    </location>
</feature>
<feature type="short sequence motif" description="'KMSKS' region">
    <location>
        <begin position="610"/>
        <end position="614"/>
    </location>
</feature>
<feature type="binding site" evidence="1">
    <location>
        <position position="613"/>
    </location>
    <ligand>
        <name>ATP</name>
        <dbReference type="ChEBI" id="CHEBI:30616"/>
    </ligand>
</feature>
<protein>
    <recommendedName>
        <fullName evidence="1">Leucine--tRNA ligase</fullName>
        <ecNumber evidence="1">6.1.1.4</ecNumber>
    </recommendedName>
    <alternativeName>
        <fullName evidence="1">Leucyl-tRNA synthetase</fullName>
        <shortName evidence="1">LeuRS</shortName>
    </alternativeName>
</protein>
<evidence type="ECO:0000255" key="1">
    <source>
        <dbReference type="HAMAP-Rule" id="MF_00049"/>
    </source>
</evidence>
<dbReference type="EC" id="6.1.1.4" evidence="1"/>
<dbReference type="EMBL" id="CP000725">
    <property type="protein sequence ID" value="ABV09691.1"/>
    <property type="molecule type" value="Genomic_DNA"/>
</dbReference>
<dbReference type="RefSeq" id="WP_012130819.1">
    <property type="nucleotide sequence ID" value="NC_009785.1"/>
</dbReference>
<dbReference type="SMR" id="A8AZ43"/>
<dbReference type="STRING" id="467705.SGO_1784"/>
<dbReference type="KEGG" id="sgo:SGO_1784"/>
<dbReference type="eggNOG" id="COG0495">
    <property type="taxonomic scope" value="Bacteria"/>
</dbReference>
<dbReference type="HOGENOM" id="CLU_004427_0_0_9"/>
<dbReference type="Proteomes" id="UP000001131">
    <property type="component" value="Chromosome"/>
</dbReference>
<dbReference type="GO" id="GO:0005829">
    <property type="term" value="C:cytosol"/>
    <property type="evidence" value="ECO:0007669"/>
    <property type="project" value="TreeGrafter"/>
</dbReference>
<dbReference type="GO" id="GO:0002161">
    <property type="term" value="F:aminoacyl-tRNA deacylase activity"/>
    <property type="evidence" value="ECO:0007669"/>
    <property type="project" value="InterPro"/>
</dbReference>
<dbReference type="GO" id="GO:0005524">
    <property type="term" value="F:ATP binding"/>
    <property type="evidence" value="ECO:0007669"/>
    <property type="project" value="UniProtKB-UniRule"/>
</dbReference>
<dbReference type="GO" id="GO:0004823">
    <property type="term" value="F:leucine-tRNA ligase activity"/>
    <property type="evidence" value="ECO:0007669"/>
    <property type="project" value="UniProtKB-UniRule"/>
</dbReference>
<dbReference type="GO" id="GO:0006429">
    <property type="term" value="P:leucyl-tRNA aminoacylation"/>
    <property type="evidence" value="ECO:0007669"/>
    <property type="project" value="UniProtKB-UniRule"/>
</dbReference>
<dbReference type="CDD" id="cd07958">
    <property type="entry name" value="Anticodon_Ia_Leu_BEm"/>
    <property type="match status" value="1"/>
</dbReference>
<dbReference type="CDD" id="cd00812">
    <property type="entry name" value="LeuRS_core"/>
    <property type="match status" value="1"/>
</dbReference>
<dbReference type="FunFam" id="1.10.730.10:FF:000012">
    <property type="entry name" value="Leucine--tRNA ligase"/>
    <property type="match status" value="1"/>
</dbReference>
<dbReference type="FunFam" id="3.40.50.620:FF:000056">
    <property type="entry name" value="Leucine--tRNA ligase"/>
    <property type="match status" value="1"/>
</dbReference>
<dbReference type="FunFam" id="3.40.50.620:FF:000077">
    <property type="entry name" value="Leucine--tRNA ligase"/>
    <property type="match status" value="1"/>
</dbReference>
<dbReference type="FunFam" id="1.10.730.10:FF:000011">
    <property type="entry name" value="Leucine--tRNA ligase chloroplastic/mitochondrial"/>
    <property type="match status" value="1"/>
</dbReference>
<dbReference type="Gene3D" id="3.40.50.620">
    <property type="entry name" value="HUPs"/>
    <property type="match status" value="2"/>
</dbReference>
<dbReference type="Gene3D" id="1.10.730.10">
    <property type="entry name" value="Isoleucyl-tRNA Synthetase, Domain 1"/>
    <property type="match status" value="1"/>
</dbReference>
<dbReference type="HAMAP" id="MF_00049_B">
    <property type="entry name" value="Leu_tRNA_synth_B"/>
    <property type="match status" value="1"/>
</dbReference>
<dbReference type="InterPro" id="IPR001412">
    <property type="entry name" value="aa-tRNA-synth_I_CS"/>
</dbReference>
<dbReference type="InterPro" id="IPR002300">
    <property type="entry name" value="aa-tRNA-synth_Ia"/>
</dbReference>
<dbReference type="InterPro" id="IPR002302">
    <property type="entry name" value="Leu-tRNA-ligase"/>
</dbReference>
<dbReference type="InterPro" id="IPR025709">
    <property type="entry name" value="Leu_tRNA-synth_edit"/>
</dbReference>
<dbReference type="InterPro" id="IPR013155">
    <property type="entry name" value="M/V/L/I-tRNA-synth_anticd-bd"/>
</dbReference>
<dbReference type="InterPro" id="IPR015413">
    <property type="entry name" value="Methionyl/Leucyl_tRNA_Synth"/>
</dbReference>
<dbReference type="InterPro" id="IPR014729">
    <property type="entry name" value="Rossmann-like_a/b/a_fold"/>
</dbReference>
<dbReference type="InterPro" id="IPR009080">
    <property type="entry name" value="tRNAsynth_Ia_anticodon-bd"/>
</dbReference>
<dbReference type="InterPro" id="IPR009008">
    <property type="entry name" value="Val/Leu/Ile-tRNA-synth_edit"/>
</dbReference>
<dbReference type="NCBIfam" id="TIGR00396">
    <property type="entry name" value="leuS_bact"/>
    <property type="match status" value="1"/>
</dbReference>
<dbReference type="PANTHER" id="PTHR43740:SF2">
    <property type="entry name" value="LEUCINE--TRNA LIGASE, MITOCHONDRIAL"/>
    <property type="match status" value="1"/>
</dbReference>
<dbReference type="PANTHER" id="PTHR43740">
    <property type="entry name" value="LEUCYL-TRNA SYNTHETASE"/>
    <property type="match status" value="1"/>
</dbReference>
<dbReference type="Pfam" id="PF08264">
    <property type="entry name" value="Anticodon_1"/>
    <property type="match status" value="1"/>
</dbReference>
<dbReference type="Pfam" id="PF00133">
    <property type="entry name" value="tRNA-synt_1"/>
    <property type="match status" value="2"/>
</dbReference>
<dbReference type="Pfam" id="PF13603">
    <property type="entry name" value="tRNA-synt_1_2"/>
    <property type="match status" value="1"/>
</dbReference>
<dbReference type="Pfam" id="PF09334">
    <property type="entry name" value="tRNA-synt_1g"/>
    <property type="match status" value="1"/>
</dbReference>
<dbReference type="PRINTS" id="PR00985">
    <property type="entry name" value="TRNASYNTHLEU"/>
</dbReference>
<dbReference type="SUPFAM" id="SSF47323">
    <property type="entry name" value="Anticodon-binding domain of a subclass of class I aminoacyl-tRNA synthetases"/>
    <property type="match status" value="1"/>
</dbReference>
<dbReference type="SUPFAM" id="SSF52374">
    <property type="entry name" value="Nucleotidylyl transferase"/>
    <property type="match status" value="1"/>
</dbReference>
<dbReference type="SUPFAM" id="SSF50677">
    <property type="entry name" value="ValRS/IleRS/LeuRS editing domain"/>
    <property type="match status" value="1"/>
</dbReference>
<dbReference type="PROSITE" id="PS00178">
    <property type="entry name" value="AA_TRNA_LIGASE_I"/>
    <property type="match status" value="1"/>
</dbReference>
<reference key="1">
    <citation type="journal article" date="2007" name="J. Bacteriol.">
        <title>Genome-wide transcriptional changes in Streptococcus gordonii in response to competence signaling peptide.</title>
        <authorList>
            <person name="Vickerman M.M."/>
            <person name="Iobst S."/>
            <person name="Jesionowski A.M."/>
            <person name="Gill S.R."/>
        </authorList>
    </citation>
    <scope>NUCLEOTIDE SEQUENCE [LARGE SCALE GENOMIC DNA]</scope>
    <source>
        <strain>Challis / ATCC 35105 / BCRC 15272 / CH1 / DL1 / V288</strain>
    </source>
</reference>
<accession>A8AZ43</accession>
<comment type="catalytic activity">
    <reaction evidence="1">
        <text>tRNA(Leu) + L-leucine + ATP = L-leucyl-tRNA(Leu) + AMP + diphosphate</text>
        <dbReference type="Rhea" id="RHEA:11688"/>
        <dbReference type="Rhea" id="RHEA-COMP:9613"/>
        <dbReference type="Rhea" id="RHEA-COMP:9622"/>
        <dbReference type="ChEBI" id="CHEBI:30616"/>
        <dbReference type="ChEBI" id="CHEBI:33019"/>
        <dbReference type="ChEBI" id="CHEBI:57427"/>
        <dbReference type="ChEBI" id="CHEBI:78442"/>
        <dbReference type="ChEBI" id="CHEBI:78494"/>
        <dbReference type="ChEBI" id="CHEBI:456215"/>
        <dbReference type="EC" id="6.1.1.4"/>
    </reaction>
</comment>
<comment type="subcellular location">
    <subcellularLocation>
        <location evidence="1">Cytoplasm</location>
    </subcellularLocation>
</comment>
<comment type="similarity">
    <text evidence="1">Belongs to the class-I aminoacyl-tRNA synthetase family.</text>
</comment>
<name>SYL_STRGC</name>
<keyword id="KW-0030">Aminoacyl-tRNA synthetase</keyword>
<keyword id="KW-0067">ATP-binding</keyword>
<keyword id="KW-0963">Cytoplasm</keyword>
<keyword id="KW-0436">Ligase</keyword>
<keyword id="KW-0547">Nucleotide-binding</keyword>
<keyword id="KW-0648">Protein biosynthesis</keyword>
<keyword id="KW-1185">Reference proteome</keyword>
<proteinExistence type="inferred from homology"/>
<organism>
    <name type="scientific">Streptococcus gordonii (strain Challis / ATCC 35105 / BCRC 15272 / CH1 / DL1 / V288)</name>
    <dbReference type="NCBI Taxonomy" id="467705"/>
    <lineage>
        <taxon>Bacteria</taxon>
        <taxon>Bacillati</taxon>
        <taxon>Bacillota</taxon>
        <taxon>Bacilli</taxon>
        <taxon>Lactobacillales</taxon>
        <taxon>Streptococcaceae</taxon>
        <taxon>Streptococcus</taxon>
    </lineage>
</organism>
<gene>
    <name evidence="1" type="primary">leuS</name>
    <name type="ordered locus">SGO_1784</name>
</gene>